<comment type="function">
    <text evidence="1">Catalyzes the intramolecular cyclization of bicyclic chalcones into tricyclic (S)-flavanones. Responsible for the isomerization of 4,2',4',6'-tetrahydroxychalcone (also termed chalcone) into naringenin (By similarity).</text>
</comment>
<comment type="catalytic activity">
    <reaction>
        <text>a chalcone = a flavanone.</text>
        <dbReference type="EC" id="5.5.1.6"/>
    </reaction>
</comment>
<comment type="pathway">
    <text>Secondary metabolite biosynthesis; flavonoid biosynthesis.</text>
</comment>
<comment type="miscellaneous">
    <text>Part of the biosynthetic pathway for all classes of flavonoids, a large class of secondary plant metabolites, many of which are brightly colored.</text>
</comment>
<comment type="similarity">
    <text evidence="2">Belongs to the chalcone isomerase family.</text>
</comment>
<sequence length="219" mass="23605">MATPWSLTAVEVDNVVFPPAVKPPSSADTFFLGGAGVRGLQIEDKFVKFTAIGIYLHDDALPFLAAKWNGKSDHELTESVEFFRDIVTGPFEKFMQVTMILPLTGQQYSEKVSENCVAIWKSLGIYTDAEAKAIDKFVSVFKDETFPPGSSILFTVSPKGSLGITFSKDGSTTTVIENKLLSEAVLESMIGKHGVSPAAKQSLASRLSGLFKAGGDTDK</sequence>
<evidence type="ECO:0000250" key="1"/>
<evidence type="ECO:0000305" key="2"/>
<accession>A4F1Q8</accession>
<feature type="chain" id="PRO_0000300834" description="Chalcone--flavanone isomerase">
    <location>
        <begin position="1"/>
        <end position="219"/>
    </location>
</feature>
<feature type="binding site" evidence="1">
    <location>
        <position position="50"/>
    </location>
    <ligand>
        <name>substrate</name>
    </ligand>
</feature>
<feature type="binding site" evidence="1">
    <location>
        <position position="115"/>
    </location>
    <ligand>
        <name>substrate</name>
    </ligand>
</feature>
<feature type="binding site" evidence="1">
    <location>
        <position position="188"/>
    </location>
    <ligand>
        <name>substrate</name>
    </ligand>
</feature>
<feature type="site" description="Important for catalytic activity" evidence="1">
    <location>
        <position position="108"/>
    </location>
</feature>
<proteinExistence type="evidence at transcript level"/>
<organism>
    <name type="scientific">Clitoria ternatea</name>
    <name type="common">Butterfly pea</name>
    <dbReference type="NCBI Taxonomy" id="43366"/>
    <lineage>
        <taxon>Eukaryota</taxon>
        <taxon>Viridiplantae</taxon>
        <taxon>Streptophyta</taxon>
        <taxon>Embryophyta</taxon>
        <taxon>Tracheophyta</taxon>
        <taxon>Spermatophyta</taxon>
        <taxon>Magnoliopsida</taxon>
        <taxon>eudicotyledons</taxon>
        <taxon>Gunneridae</taxon>
        <taxon>Pentapetalae</taxon>
        <taxon>rosids</taxon>
        <taxon>fabids</taxon>
        <taxon>Fabales</taxon>
        <taxon>Fabaceae</taxon>
        <taxon>Papilionoideae</taxon>
        <taxon>50 kb inversion clade</taxon>
        <taxon>NPAAA clade</taxon>
        <taxon>indigoferoid/millettioid clade</taxon>
        <taxon>Phaseoleae</taxon>
        <taxon>Clitoria</taxon>
    </lineage>
</organism>
<dbReference type="EC" id="5.5.1.6"/>
<dbReference type="EMBL" id="AB185898">
    <property type="protein sequence ID" value="BAF49291.1"/>
    <property type="molecule type" value="mRNA"/>
</dbReference>
<dbReference type="SMR" id="A4F1Q8"/>
<dbReference type="UniPathway" id="UPA00154"/>
<dbReference type="GO" id="GO:0045430">
    <property type="term" value="F:chalcone isomerase activity"/>
    <property type="evidence" value="ECO:0007669"/>
    <property type="project" value="UniProtKB-EC"/>
</dbReference>
<dbReference type="GO" id="GO:0009813">
    <property type="term" value="P:flavonoid biosynthetic process"/>
    <property type="evidence" value="ECO:0007669"/>
    <property type="project" value="UniProtKB-UniPathway"/>
</dbReference>
<dbReference type="Gene3D" id="1.10.890.20">
    <property type="match status" value="1"/>
</dbReference>
<dbReference type="Gene3D" id="3.50.70.10">
    <property type="match status" value="1"/>
</dbReference>
<dbReference type="InterPro" id="IPR044164">
    <property type="entry name" value="CFI"/>
</dbReference>
<dbReference type="InterPro" id="IPR016087">
    <property type="entry name" value="Chalcone_isomerase"/>
</dbReference>
<dbReference type="InterPro" id="IPR016088">
    <property type="entry name" value="Chalcone_isomerase_3-sand"/>
</dbReference>
<dbReference type="InterPro" id="IPR016089">
    <property type="entry name" value="Chalcone_isomerase_bundle_sf"/>
</dbReference>
<dbReference type="InterPro" id="IPR036298">
    <property type="entry name" value="Chalcone_isomerase_sf"/>
</dbReference>
<dbReference type="PANTHER" id="PTHR28039:SF8">
    <property type="entry name" value="CHALCONE--FLAVANONE ISOMERASE 1-RELATED"/>
    <property type="match status" value="1"/>
</dbReference>
<dbReference type="PANTHER" id="PTHR28039">
    <property type="entry name" value="CHALCONE--FLAVONONE ISOMERASE 1-RELATED"/>
    <property type="match status" value="1"/>
</dbReference>
<dbReference type="Pfam" id="PF02431">
    <property type="entry name" value="Chalcone"/>
    <property type="match status" value="1"/>
</dbReference>
<dbReference type="SUPFAM" id="SSF54626">
    <property type="entry name" value="Chalcone isomerase"/>
    <property type="match status" value="1"/>
</dbReference>
<gene>
    <name type="primary">CHI</name>
</gene>
<name>CFI_CLITE</name>
<keyword id="KW-0284">Flavonoid biosynthesis</keyword>
<keyword id="KW-0413">Isomerase</keyword>
<reference key="1">
    <citation type="submission" date="2004-07" db="EMBL/GenBank/DDBJ databases">
        <title>Cloning and characterization of genes involved in flavonoid biosynthesis from Clitoria ternatea.</title>
        <authorList>
            <person name="Noda N."/>
        </authorList>
    </citation>
    <scope>NUCLEOTIDE SEQUENCE [MRNA]</scope>
    <source>
        <strain>cv. Double Blue</strain>
        <tissue>Petal</tissue>
    </source>
</reference>
<protein>
    <recommendedName>
        <fullName>Chalcone--flavanone isomerase</fullName>
        <shortName>Chalcone isomerase</shortName>
        <ecNumber>5.5.1.6</ecNumber>
    </recommendedName>
</protein>